<gene>
    <name type="primary">rpl32e</name>
    <name type="ordered locus">MJ0472</name>
</gene>
<feature type="chain" id="PRO_0000131151" description="Large ribosomal subunit protein eL32">
    <location>
        <begin position="1"/>
        <end position="146"/>
    </location>
</feature>
<organism>
    <name type="scientific">Methanocaldococcus jannaschii (strain ATCC 43067 / DSM 2661 / JAL-1 / JCM 10045 / NBRC 100440)</name>
    <name type="common">Methanococcus jannaschii</name>
    <dbReference type="NCBI Taxonomy" id="243232"/>
    <lineage>
        <taxon>Archaea</taxon>
        <taxon>Methanobacteriati</taxon>
        <taxon>Methanobacteriota</taxon>
        <taxon>Methanomada group</taxon>
        <taxon>Methanococci</taxon>
        <taxon>Methanococcales</taxon>
        <taxon>Methanocaldococcaceae</taxon>
        <taxon>Methanocaldococcus</taxon>
    </lineage>
</organism>
<reference key="1">
    <citation type="journal article" date="1996" name="Science">
        <title>Complete genome sequence of the methanogenic archaeon, Methanococcus jannaschii.</title>
        <authorList>
            <person name="Bult C.J."/>
            <person name="White O."/>
            <person name="Olsen G.J."/>
            <person name="Zhou L."/>
            <person name="Fleischmann R.D."/>
            <person name="Sutton G.G."/>
            <person name="Blake J.A."/>
            <person name="FitzGerald L.M."/>
            <person name="Clayton R.A."/>
            <person name="Gocayne J.D."/>
            <person name="Kerlavage A.R."/>
            <person name="Dougherty B.A."/>
            <person name="Tomb J.-F."/>
            <person name="Adams M.D."/>
            <person name="Reich C.I."/>
            <person name="Overbeek R."/>
            <person name="Kirkness E.F."/>
            <person name="Weinstock K.G."/>
            <person name="Merrick J.M."/>
            <person name="Glodek A."/>
            <person name="Scott J.L."/>
            <person name="Geoghagen N.S.M."/>
            <person name="Weidman J.F."/>
            <person name="Fuhrmann J.L."/>
            <person name="Nguyen D."/>
            <person name="Utterback T.R."/>
            <person name="Kelley J.M."/>
            <person name="Peterson J.D."/>
            <person name="Sadow P.W."/>
            <person name="Hanna M.C."/>
            <person name="Cotton M.D."/>
            <person name="Roberts K.M."/>
            <person name="Hurst M.A."/>
            <person name="Kaine B.P."/>
            <person name="Borodovsky M."/>
            <person name="Klenk H.-P."/>
            <person name="Fraser C.M."/>
            <person name="Smith H.O."/>
            <person name="Woese C.R."/>
            <person name="Venter J.C."/>
        </authorList>
    </citation>
    <scope>NUCLEOTIDE SEQUENCE [LARGE SCALE GENOMIC DNA]</scope>
    <source>
        <strain>ATCC 43067 / DSM 2661 / JAL-1 / JCM 10045 / NBRC 100440</strain>
    </source>
</reference>
<protein>
    <recommendedName>
        <fullName evidence="1">Large ribosomal subunit protein eL32</fullName>
    </recommendedName>
    <alternativeName>
        <fullName>50S ribosomal protein L32e</fullName>
    </alternativeName>
</protein>
<comment type="similarity">
    <text evidence="1">Belongs to the eukaryotic ribosomal protein eL32 family.</text>
</comment>
<evidence type="ECO:0000305" key="1"/>
<keyword id="KW-1185">Reference proteome</keyword>
<keyword id="KW-0687">Ribonucleoprotein</keyword>
<keyword id="KW-0689">Ribosomal protein</keyword>
<accession>P54010</accession>
<proteinExistence type="inferred from homology"/>
<dbReference type="EMBL" id="L77117">
    <property type="protein sequence ID" value="AAB98461.1"/>
    <property type="molecule type" value="Genomic_DNA"/>
</dbReference>
<dbReference type="PIR" id="H64358">
    <property type="entry name" value="H64358"/>
</dbReference>
<dbReference type="RefSeq" id="WP_010869973.1">
    <property type="nucleotide sequence ID" value="NC_000909.1"/>
</dbReference>
<dbReference type="SMR" id="P54010"/>
<dbReference type="FunCoup" id="P54010">
    <property type="interactions" value="184"/>
</dbReference>
<dbReference type="STRING" id="243232.MJ_0472"/>
<dbReference type="PaxDb" id="243232-MJ_0472"/>
<dbReference type="EnsemblBacteria" id="AAB98461">
    <property type="protein sequence ID" value="AAB98461"/>
    <property type="gene ID" value="MJ_0472"/>
</dbReference>
<dbReference type="GeneID" id="1451334"/>
<dbReference type="KEGG" id="mja:MJ_0472"/>
<dbReference type="eggNOG" id="arCOG00781">
    <property type="taxonomic scope" value="Archaea"/>
</dbReference>
<dbReference type="HOGENOM" id="CLU_071479_3_1_2"/>
<dbReference type="InParanoid" id="P54010"/>
<dbReference type="OrthoDB" id="372100at2157"/>
<dbReference type="PhylomeDB" id="P54010"/>
<dbReference type="Proteomes" id="UP000000805">
    <property type="component" value="Chromosome"/>
</dbReference>
<dbReference type="GO" id="GO:0022625">
    <property type="term" value="C:cytosolic large ribosomal subunit"/>
    <property type="evidence" value="ECO:0000318"/>
    <property type="project" value="GO_Central"/>
</dbReference>
<dbReference type="GO" id="GO:0003735">
    <property type="term" value="F:structural constituent of ribosome"/>
    <property type="evidence" value="ECO:0007669"/>
    <property type="project" value="InterPro"/>
</dbReference>
<dbReference type="GO" id="GO:0006412">
    <property type="term" value="P:translation"/>
    <property type="evidence" value="ECO:0007669"/>
    <property type="project" value="UniProtKB-UniRule"/>
</dbReference>
<dbReference type="CDD" id="cd00513">
    <property type="entry name" value="Ribosomal_L32_L32e"/>
    <property type="match status" value="1"/>
</dbReference>
<dbReference type="HAMAP" id="MF_00810">
    <property type="entry name" value="Ribosomal_eL32"/>
    <property type="match status" value="1"/>
</dbReference>
<dbReference type="InterPro" id="IPR001515">
    <property type="entry name" value="Ribosomal_eL32"/>
</dbReference>
<dbReference type="InterPro" id="IPR023654">
    <property type="entry name" value="Ribosomal_eL32_arc"/>
</dbReference>
<dbReference type="InterPro" id="IPR018263">
    <property type="entry name" value="Ribosomal_eL32_CS"/>
</dbReference>
<dbReference type="InterPro" id="IPR036351">
    <property type="entry name" value="Ribosomal_eL32_sf"/>
</dbReference>
<dbReference type="NCBIfam" id="NF006332">
    <property type="entry name" value="PRK08562.1"/>
    <property type="match status" value="1"/>
</dbReference>
<dbReference type="PANTHER" id="PTHR23413">
    <property type="entry name" value="60S RIBOSOMAL PROTEIN L32 AND DNA-DIRECTED RNA POLYMERASE II, SUBUNIT N"/>
    <property type="match status" value="1"/>
</dbReference>
<dbReference type="PANTHER" id="PTHR23413:SF1">
    <property type="entry name" value="RIBOSOMAL PROTEIN L32"/>
    <property type="match status" value="1"/>
</dbReference>
<dbReference type="Pfam" id="PF01655">
    <property type="entry name" value="Ribosomal_L32e"/>
    <property type="match status" value="1"/>
</dbReference>
<dbReference type="SMART" id="SM01393">
    <property type="entry name" value="Ribosomal_L32e"/>
    <property type="match status" value="1"/>
</dbReference>
<dbReference type="SUPFAM" id="SSF52042">
    <property type="entry name" value="Ribosomal protein L32e"/>
    <property type="match status" value="1"/>
</dbReference>
<dbReference type="PROSITE" id="PS00580">
    <property type="entry name" value="RIBOSOMAL_L32E"/>
    <property type="match status" value="1"/>
</dbReference>
<name>RL32_METJA</name>
<sequence>MNRLLRLRFKLKMKKPDFIRQEAHRHKRLGEKWRRPKGRHSKMRLKWKEKPPVVEIGYRSPKAVRGLHPSGLEDVLVYNVKDLEKLNPETQGARIASTVGKRKKIEIIIRARELGIRILNISEEKQEELLKLAEKQEAQEVNETNE</sequence>